<proteinExistence type="inferred from homology"/>
<dbReference type="EC" id="2.1.1.173" evidence="1"/>
<dbReference type="EC" id="2.1.1.264" evidence="1"/>
<dbReference type="EMBL" id="CU459141">
    <property type="protein sequence ID" value="CAM87418.1"/>
    <property type="molecule type" value="Genomic_DNA"/>
</dbReference>
<dbReference type="SMR" id="B0VAL5"/>
<dbReference type="EnsemblBacteria" id="CAM87418">
    <property type="protein sequence ID" value="CAM87418"/>
    <property type="gene ID" value="ABAYE2580"/>
</dbReference>
<dbReference type="KEGG" id="aby:ABAYE2580"/>
<dbReference type="HOGENOM" id="CLU_014042_2_0_6"/>
<dbReference type="GO" id="GO:0005737">
    <property type="term" value="C:cytoplasm"/>
    <property type="evidence" value="ECO:0007669"/>
    <property type="project" value="UniProtKB-SubCell"/>
</dbReference>
<dbReference type="GO" id="GO:0052915">
    <property type="term" value="F:23S rRNA (guanine(2445)-N(2))-methyltransferase activity"/>
    <property type="evidence" value="ECO:0007669"/>
    <property type="project" value="UniProtKB-UniRule"/>
</dbReference>
<dbReference type="GO" id="GO:0003723">
    <property type="term" value="F:RNA binding"/>
    <property type="evidence" value="ECO:0007669"/>
    <property type="project" value="UniProtKB-KW"/>
</dbReference>
<dbReference type="GO" id="GO:0070043">
    <property type="term" value="F:rRNA (guanine-N7-)-methyltransferase activity"/>
    <property type="evidence" value="ECO:0007669"/>
    <property type="project" value="UniProtKB-UniRule"/>
</dbReference>
<dbReference type="CDD" id="cd02440">
    <property type="entry name" value="AdoMet_MTases"/>
    <property type="match status" value="1"/>
</dbReference>
<dbReference type="CDD" id="cd11715">
    <property type="entry name" value="THUMP_AdoMetMT"/>
    <property type="match status" value="1"/>
</dbReference>
<dbReference type="Gene3D" id="3.30.2130.30">
    <property type="match status" value="1"/>
</dbReference>
<dbReference type="Gene3D" id="3.30.750.80">
    <property type="entry name" value="RNA methyltransferase domain (HRMD) like"/>
    <property type="match status" value="1"/>
</dbReference>
<dbReference type="Gene3D" id="3.40.50.150">
    <property type="entry name" value="Vaccinia Virus protein VP39"/>
    <property type="match status" value="2"/>
</dbReference>
<dbReference type="HAMAP" id="MF_01858">
    <property type="entry name" value="23SrRNA_methyltr_KL"/>
    <property type="match status" value="1"/>
</dbReference>
<dbReference type="InterPro" id="IPR017244">
    <property type="entry name" value="23SrRNA_methyltr_KL"/>
</dbReference>
<dbReference type="InterPro" id="IPR002052">
    <property type="entry name" value="DNA_methylase_N6_adenine_CS"/>
</dbReference>
<dbReference type="InterPro" id="IPR000241">
    <property type="entry name" value="RlmKL-like_Mtase"/>
</dbReference>
<dbReference type="InterPro" id="IPR053943">
    <property type="entry name" value="RlmKL-like_Mtase_CS"/>
</dbReference>
<dbReference type="InterPro" id="IPR054170">
    <property type="entry name" value="RlmL_1st"/>
</dbReference>
<dbReference type="InterPro" id="IPR019614">
    <property type="entry name" value="SAM-dep_methyl-trfase"/>
</dbReference>
<dbReference type="InterPro" id="IPR029063">
    <property type="entry name" value="SAM-dependent_MTases_sf"/>
</dbReference>
<dbReference type="InterPro" id="IPR004114">
    <property type="entry name" value="THUMP_dom"/>
</dbReference>
<dbReference type="NCBIfam" id="NF008748">
    <property type="entry name" value="PRK11783.1"/>
    <property type="match status" value="1"/>
</dbReference>
<dbReference type="PANTHER" id="PTHR47313">
    <property type="entry name" value="RIBOSOMAL RNA LARGE SUBUNIT METHYLTRANSFERASE K/L"/>
    <property type="match status" value="1"/>
</dbReference>
<dbReference type="PANTHER" id="PTHR47313:SF1">
    <property type="entry name" value="RIBOSOMAL RNA LARGE SUBUNIT METHYLTRANSFERASE K_L"/>
    <property type="match status" value="1"/>
</dbReference>
<dbReference type="Pfam" id="PF10672">
    <property type="entry name" value="Methyltrans_SAM"/>
    <property type="match status" value="1"/>
</dbReference>
<dbReference type="Pfam" id="PF22020">
    <property type="entry name" value="RlmL_1st"/>
    <property type="match status" value="1"/>
</dbReference>
<dbReference type="Pfam" id="PF02926">
    <property type="entry name" value="THUMP"/>
    <property type="match status" value="1"/>
</dbReference>
<dbReference type="Pfam" id="PF01170">
    <property type="entry name" value="UPF0020"/>
    <property type="match status" value="1"/>
</dbReference>
<dbReference type="PIRSF" id="PIRSF037618">
    <property type="entry name" value="RNA_Mtase_bacteria_prd"/>
    <property type="match status" value="1"/>
</dbReference>
<dbReference type="PRINTS" id="PR00507">
    <property type="entry name" value="N12N6MTFRASE"/>
</dbReference>
<dbReference type="SMART" id="SM00981">
    <property type="entry name" value="THUMP"/>
    <property type="match status" value="1"/>
</dbReference>
<dbReference type="SUPFAM" id="SSF53335">
    <property type="entry name" value="S-adenosyl-L-methionine-dependent methyltransferases"/>
    <property type="match status" value="2"/>
</dbReference>
<dbReference type="PROSITE" id="PS51165">
    <property type="entry name" value="THUMP"/>
    <property type="match status" value="1"/>
</dbReference>
<dbReference type="PROSITE" id="PS01261">
    <property type="entry name" value="UPF0020"/>
    <property type="match status" value="1"/>
</dbReference>
<comment type="function">
    <text evidence="1">Specifically methylates the guanine in position 2445 (m2G2445) and the guanine in position 2069 (m7G2069) of 23S rRNA.</text>
</comment>
<comment type="catalytic activity">
    <reaction evidence="1">
        <text>guanosine(2445) in 23S rRNA + S-adenosyl-L-methionine = N(2)-methylguanosine(2445) in 23S rRNA + S-adenosyl-L-homocysteine + H(+)</text>
        <dbReference type="Rhea" id="RHEA:42740"/>
        <dbReference type="Rhea" id="RHEA-COMP:10215"/>
        <dbReference type="Rhea" id="RHEA-COMP:10216"/>
        <dbReference type="ChEBI" id="CHEBI:15378"/>
        <dbReference type="ChEBI" id="CHEBI:57856"/>
        <dbReference type="ChEBI" id="CHEBI:59789"/>
        <dbReference type="ChEBI" id="CHEBI:74269"/>
        <dbReference type="ChEBI" id="CHEBI:74481"/>
        <dbReference type="EC" id="2.1.1.173"/>
    </reaction>
</comment>
<comment type="catalytic activity">
    <reaction evidence="1">
        <text>guanosine(2069) in 23S rRNA + S-adenosyl-L-methionine = N(2)-methylguanosine(2069) in 23S rRNA + S-adenosyl-L-homocysteine + H(+)</text>
        <dbReference type="Rhea" id="RHEA:43772"/>
        <dbReference type="Rhea" id="RHEA-COMP:10688"/>
        <dbReference type="Rhea" id="RHEA-COMP:10689"/>
        <dbReference type="ChEBI" id="CHEBI:15378"/>
        <dbReference type="ChEBI" id="CHEBI:57856"/>
        <dbReference type="ChEBI" id="CHEBI:59789"/>
        <dbReference type="ChEBI" id="CHEBI:74269"/>
        <dbReference type="ChEBI" id="CHEBI:74481"/>
        <dbReference type="EC" id="2.1.1.264"/>
    </reaction>
</comment>
<comment type="subcellular location">
    <subcellularLocation>
        <location evidence="1">Cytoplasm</location>
    </subcellularLocation>
</comment>
<comment type="similarity">
    <text evidence="1">Belongs to the methyltransferase superfamily. RlmKL family.</text>
</comment>
<gene>
    <name evidence="1" type="primary">rlmL</name>
    <name type="ordered locus">ABAYE2580</name>
</gene>
<name>RLMKL_ACIBY</name>
<evidence type="ECO:0000255" key="1">
    <source>
        <dbReference type="HAMAP-Rule" id="MF_01858"/>
    </source>
</evidence>
<sequence length="734" mass="83859">MNTSLRLNHYWITCADGLETLLQEEIEQLGTKVTERKAGRLIIEGTLEHAYRICMWSRLASRVLLPIHTYELERTHDARDVAEELYEGAISFDWSLIFAPQSTFAIRLHAEREIKVNTQFATLRVKDGVVDSFMEAVGRRPSIDTKQPEITLYVLAGKTEHTYCLDLSGDSLHKRGYRRFMTDAPIKENLAAAILQKAKLQERNPEIVLDPMCGSGTFIIEALMILTDRAPGLVRRFGFNGWHGHDRELWLSLKAEAAERHEKALEQPLPKFYAYDADWEAVKATRENIIAAGFEKLLGDIQIEERTLADWPDFGAENKTAFIVTNPPYGERLGDKASNRSLYLGLSALLQKNFPNQYAAIIAAQIEQADVLAFEAPETLRLMNGKLPIYVRFGTVKPEKVTQPFLANWQAQPVEMEEAQDFANRLQKNMTALKKWATKENIYCLRLYDADLPDFNLAVDLYGDRLHVQEYAPPKKIDPEKAKKRFNLALAAIRAVTGLNRDAIFIKTRARQTGTNQYTKQSTANKRFIVQEGKAKILVNLTDYLDTGLFLDHRQMRLRIAQEARGKHFLNLYSYTSTASLHAALGGAASTTSVDLSNTYLSWSKENFVLNGLTVDHADEQHMFFASDCFEWLKEGHEQYDLIFIDPPTFSNSKKFHGTFDVQRDHVSLIKRAMNRLTSEGTLYFSNNYRGFEMDEEIEALYDVEEITSETIGPDFKRNQKIHRAWKIQHPGLN</sequence>
<keyword id="KW-0963">Cytoplasm</keyword>
<keyword id="KW-0489">Methyltransferase</keyword>
<keyword id="KW-0694">RNA-binding</keyword>
<keyword id="KW-0698">rRNA processing</keyword>
<keyword id="KW-0949">S-adenosyl-L-methionine</keyword>
<keyword id="KW-0808">Transferase</keyword>
<reference key="1">
    <citation type="journal article" date="2008" name="PLoS ONE">
        <title>Comparative analysis of Acinetobacters: three genomes for three lifestyles.</title>
        <authorList>
            <person name="Vallenet D."/>
            <person name="Nordmann P."/>
            <person name="Barbe V."/>
            <person name="Poirel L."/>
            <person name="Mangenot S."/>
            <person name="Bataille E."/>
            <person name="Dossat C."/>
            <person name="Gas S."/>
            <person name="Kreimeyer A."/>
            <person name="Lenoble P."/>
            <person name="Oztas S."/>
            <person name="Poulain J."/>
            <person name="Segurens B."/>
            <person name="Robert C."/>
            <person name="Abergel C."/>
            <person name="Claverie J.-M."/>
            <person name="Raoult D."/>
            <person name="Medigue C."/>
            <person name="Weissenbach J."/>
            <person name="Cruveiller S."/>
        </authorList>
    </citation>
    <scope>NUCLEOTIDE SEQUENCE [LARGE SCALE GENOMIC DNA]</scope>
    <source>
        <strain>AYE</strain>
    </source>
</reference>
<feature type="chain" id="PRO_0000366715" description="Ribosomal RNA large subunit methyltransferase K/L">
    <location>
        <begin position="1"/>
        <end position="734"/>
    </location>
</feature>
<feature type="domain" description="THUMP" evidence="1">
    <location>
        <begin position="49"/>
        <end position="167"/>
    </location>
</feature>
<organism>
    <name type="scientific">Acinetobacter baumannii (strain AYE)</name>
    <dbReference type="NCBI Taxonomy" id="509173"/>
    <lineage>
        <taxon>Bacteria</taxon>
        <taxon>Pseudomonadati</taxon>
        <taxon>Pseudomonadota</taxon>
        <taxon>Gammaproteobacteria</taxon>
        <taxon>Moraxellales</taxon>
        <taxon>Moraxellaceae</taxon>
        <taxon>Acinetobacter</taxon>
        <taxon>Acinetobacter calcoaceticus/baumannii complex</taxon>
    </lineage>
</organism>
<protein>
    <recommendedName>
        <fullName evidence="1">Ribosomal RNA large subunit methyltransferase K/L</fullName>
    </recommendedName>
    <domain>
        <recommendedName>
            <fullName evidence="1">23S rRNA m2G2445 methyltransferase</fullName>
            <ecNumber evidence="1">2.1.1.173</ecNumber>
        </recommendedName>
        <alternativeName>
            <fullName evidence="1">rRNA (guanine-N(2)-)-methyltransferase RlmL</fullName>
        </alternativeName>
    </domain>
    <domain>
        <recommendedName>
            <fullName evidence="1">23S rRNA m7G2069 methyltransferase</fullName>
            <ecNumber evidence="1">2.1.1.264</ecNumber>
        </recommendedName>
        <alternativeName>
            <fullName evidence="1">rRNA (guanine-N(7)-)-methyltransferase RlmK</fullName>
        </alternativeName>
    </domain>
</protein>
<accession>B0VAL5</accession>